<keyword id="KW-0028">Amino-acid biosynthesis</keyword>
<keyword id="KW-0055">Arginine biosynthesis</keyword>
<keyword id="KW-0067">ATP-binding</keyword>
<keyword id="KW-0963">Cytoplasm</keyword>
<keyword id="KW-0436">Ligase</keyword>
<keyword id="KW-0547">Nucleotide-binding</keyword>
<dbReference type="EC" id="6.3.4.5" evidence="1"/>
<dbReference type="EMBL" id="AE017261">
    <property type="protein sequence ID" value="AAT43115.1"/>
    <property type="molecule type" value="Genomic_DNA"/>
</dbReference>
<dbReference type="RefSeq" id="WP_011177331.1">
    <property type="nucleotide sequence ID" value="NC_005877.1"/>
</dbReference>
<dbReference type="SMR" id="Q6L1N7"/>
<dbReference type="FunCoup" id="Q6L1N7">
    <property type="interactions" value="201"/>
</dbReference>
<dbReference type="STRING" id="263820.PTO0530"/>
<dbReference type="PaxDb" id="263820-PTO0530"/>
<dbReference type="GeneID" id="2844608"/>
<dbReference type="KEGG" id="pto:PTO0530"/>
<dbReference type="PATRIC" id="fig|263820.9.peg.558"/>
<dbReference type="eggNOG" id="arCOG00112">
    <property type="taxonomic scope" value="Archaea"/>
</dbReference>
<dbReference type="HOGENOM" id="CLU_032784_4_2_2"/>
<dbReference type="InParanoid" id="Q6L1N7"/>
<dbReference type="OrthoDB" id="5877at2157"/>
<dbReference type="UniPathway" id="UPA00068">
    <property type="reaction ID" value="UER00113"/>
</dbReference>
<dbReference type="Proteomes" id="UP000000438">
    <property type="component" value="Chromosome"/>
</dbReference>
<dbReference type="GO" id="GO:0005737">
    <property type="term" value="C:cytoplasm"/>
    <property type="evidence" value="ECO:0007669"/>
    <property type="project" value="UniProtKB-SubCell"/>
</dbReference>
<dbReference type="GO" id="GO:0004055">
    <property type="term" value="F:argininosuccinate synthase activity"/>
    <property type="evidence" value="ECO:0007669"/>
    <property type="project" value="UniProtKB-UniRule"/>
</dbReference>
<dbReference type="GO" id="GO:0005524">
    <property type="term" value="F:ATP binding"/>
    <property type="evidence" value="ECO:0007669"/>
    <property type="project" value="UniProtKB-UniRule"/>
</dbReference>
<dbReference type="GO" id="GO:0000053">
    <property type="term" value="P:argininosuccinate metabolic process"/>
    <property type="evidence" value="ECO:0007669"/>
    <property type="project" value="TreeGrafter"/>
</dbReference>
<dbReference type="GO" id="GO:0006526">
    <property type="term" value="P:L-arginine biosynthetic process"/>
    <property type="evidence" value="ECO:0007669"/>
    <property type="project" value="UniProtKB-UniRule"/>
</dbReference>
<dbReference type="GO" id="GO:0000050">
    <property type="term" value="P:urea cycle"/>
    <property type="evidence" value="ECO:0007669"/>
    <property type="project" value="TreeGrafter"/>
</dbReference>
<dbReference type="CDD" id="cd01999">
    <property type="entry name" value="ASS"/>
    <property type="match status" value="1"/>
</dbReference>
<dbReference type="FunFam" id="3.40.50.620:FF:000019">
    <property type="entry name" value="Argininosuccinate synthase"/>
    <property type="match status" value="1"/>
</dbReference>
<dbReference type="FunFam" id="3.90.1260.10:FF:000007">
    <property type="entry name" value="Argininosuccinate synthase"/>
    <property type="match status" value="1"/>
</dbReference>
<dbReference type="Gene3D" id="3.90.1260.10">
    <property type="entry name" value="Argininosuccinate synthetase, chain A, domain 2"/>
    <property type="match status" value="1"/>
</dbReference>
<dbReference type="Gene3D" id="3.40.50.620">
    <property type="entry name" value="HUPs"/>
    <property type="match status" value="1"/>
</dbReference>
<dbReference type="HAMAP" id="MF_00005">
    <property type="entry name" value="Arg_succ_synth_type1"/>
    <property type="match status" value="1"/>
</dbReference>
<dbReference type="InterPro" id="IPR048268">
    <property type="entry name" value="Arginosuc_syn_C"/>
</dbReference>
<dbReference type="InterPro" id="IPR048267">
    <property type="entry name" value="Arginosuc_syn_N"/>
</dbReference>
<dbReference type="InterPro" id="IPR001518">
    <property type="entry name" value="Arginosuc_synth"/>
</dbReference>
<dbReference type="InterPro" id="IPR018223">
    <property type="entry name" value="Arginosuc_synth_CS"/>
</dbReference>
<dbReference type="InterPro" id="IPR023434">
    <property type="entry name" value="Arginosuc_synth_type_1_subfam"/>
</dbReference>
<dbReference type="InterPro" id="IPR024074">
    <property type="entry name" value="AS_cat/multimer_dom_body"/>
</dbReference>
<dbReference type="InterPro" id="IPR014729">
    <property type="entry name" value="Rossmann-like_a/b/a_fold"/>
</dbReference>
<dbReference type="NCBIfam" id="TIGR00032">
    <property type="entry name" value="argG"/>
    <property type="match status" value="1"/>
</dbReference>
<dbReference type="NCBIfam" id="NF001770">
    <property type="entry name" value="PRK00509.1"/>
    <property type="match status" value="1"/>
</dbReference>
<dbReference type="PANTHER" id="PTHR11587">
    <property type="entry name" value="ARGININOSUCCINATE SYNTHASE"/>
    <property type="match status" value="1"/>
</dbReference>
<dbReference type="PANTHER" id="PTHR11587:SF2">
    <property type="entry name" value="ARGININOSUCCINATE SYNTHASE"/>
    <property type="match status" value="1"/>
</dbReference>
<dbReference type="Pfam" id="PF20979">
    <property type="entry name" value="Arginosuc_syn_C"/>
    <property type="match status" value="1"/>
</dbReference>
<dbReference type="Pfam" id="PF00764">
    <property type="entry name" value="Arginosuc_synth"/>
    <property type="match status" value="1"/>
</dbReference>
<dbReference type="SUPFAM" id="SSF52402">
    <property type="entry name" value="Adenine nucleotide alpha hydrolases-like"/>
    <property type="match status" value="1"/>
</dbReference>
<dbReference type="SUPFAM" id="SSF69864">
    <property type="entry name" value="Argininosuccinate synthetase, C-terminal domain"/>
    <property type="match status" value="1"/>
</dbReference>
<dbReference type="PROSITE" id="PS00564">
    <property type="entry name" value="ARGININOSUCCIN_SYN_1"/>
    <property type="match status" value="1"/>
</dbReference>
<dbReference type="PROSITE" id="PS00565">
    <property type="entry name" value="ARGININOSUCCIN_SYN_2"/>
    <property type="match status" value="1"/>
</dbReference>
<accession>Q6L1N7</accession>
<name>ASSY_PICTO</name>
<feature type="chain" id="PRO_0000148682" description="Argininosuccinate synthase">
    <location>
        <begin position="1"/>
        <end position="395"/>
    </location>
</feature>
<feature type="binding site" evidence="1">
    <location>
        <begin position="7"/>
        <end position="15"/>
    </location>
    <ligand>
        <name>ATP</name>
        <dbReference type="ChEBI" id="CHEBI:30616"/>
    </ligand>
</feature>
<feature type="binding site" evidence="1">
    <location>
        <position position="83"/>
    </location>
    <ligand>
        <name>L-citrulline</name>
        <dbReference type="ChEBI" id="CHEBI:57743"/>
    </ligand>
</feature>
<feature type="binding site" evidence="1">
    <location>
        <position position="113"/>
    </location>
    <ligand>
        <name>ATP</name>
        <dbReference type="ChEBI" id="CHEBI:30616"/>
    </ligand>
</feature>
<feature type="binding site" evidence="1">
    <location>
        <position position="115"/>
    </location>
    <ligand>
        <name>L-aspartate</name>
        <dbReference type="ChEBI" id="CHEBI:29991"/>
    </ligand>
</feature>
<feature type="binding site" evidence="1">
    <location>
        <position position="119"/>
    </location>
    <ligand>
        <name>L-aspartate</name>
        <dbReference type="ChEBI" id="CHEBI:29991"/>
    </ligand>
</feature>
<feature type="binding site" evidence="1">
    <location>
        <position position="119"/>
    </location>
    <ligand>
        <name>L-citrulline</name>
        <dbReference type="ChEBI" id="CHEBI:57743"/>
    </ligand>
</feature>
<feature type="binding site" evidence="1">
    <location>
        <position position="120"/>
    </location>
    <ligand>
        <name>L-aspartate</name>
        <dbReference type="ChEBI" id="CHEBI:29991"/>
    </ligand>
</feature>
<feature type="binding site" evidence="1">
    <location>
        <position position="123"/>
    </location>
    <ligand>
        <name>L-citrulline</name>
        <dbReference type="ChEBI" id="CHEBI:57743"/>
    </ligand>
</feature>
<feature type="binding site" evidence="1">
    <location>
        <position position="169"/>
    </location>
    <ligand>
        <name>L-citrulline</name>
        <dbReference type="ChEBI" id="CHEBI:57743"/>
    </ligand>
</feature>
<feature type="binding site" evidence="1">
    <location>
        <position position="178"/>
    </location>
    <ligand>
        <name>L-citrulline</name>
        <dbReference type="ChEBI" id="CHEBI:57743"/>
    </ligand>
</feature>
<feature type="binding site" evidence="1">
    <location>
        <position position="253"/>
    </location>
    <ligand>
        <name>L-citrulline</name>
        <dbReference type="ChEBI" id="CHEBI:57743"/>
    </ligand>
</feature>
<feature type="binding site" evidence="1">
    <location>
        <position position="265"/>
    </location>
    <ligand>
        <name>L-citrulline</name>
        <dbReference type="ChEBI" id="CHEBI:57743"/>
    </ligand>
</feature>
<protein>
    <recommendedName>
        <fullName evidence="1">Argininosuccinate synthase</fullName>
        <ecNumber evidence="1">6.3.4.5</ecNumber>
    </recommendedName>
    <alternativeName>
        <fullName evidence="1">Citrulline--aspartate ligase</fullName>
    </alternativeName>
</protein>
<organism>
    <name type="scientific">Picrophilus torridus (strain ATCC 700027 / DSM 9790 / JCM 10055 / NBRC 100828 / KAW 2/3)</name>
    <dbReference type="NCBI Taxonomy" id="1122961"/>
    <lineage>
        <taxon>Archaea</taxon>
        <taxon>Methanobacteriati</taxon>
        <taxon>Thermoplasmatota</taxon>
        <taxon>Thermoplasmata</taxon>
        <taxon>Thermoplasmatales</taxon>
        <taxon>Picrophilaceae</taxon>
        <taxon>Picrophilus</taxon>
    </lineage>
</organism>
<proteinExistence type="inferred from homology"/>
<comment type="catalytic activity">
    <reaction evidence="1">
        <text>L-citrulline + L-aspartate + ATP = 2-(N(omega)-L-arginino)succinate + AMP + diphosphate + H(+)</text>
        <dbReference type="Rhea" id="RHEA:10932"/>
        <dbReference type="ChEBI" id="CHEBI:15378"/>
        <dbReference type="ChEBI" id="CHEBI:29991"/>
        <dbReference type="ChEBI" id="CHEBI:30616"/>
        <dbReference type="ChEBI" id="CHEBI:33019"/>
        <dbReference type="ChEBI" id="CHEBI:57472"/>
        <dbReference type="ChEBI" id="CHEBI:57743"/>
        <dbReference type="ChEBI" id="CHEBI:456215"/>
        <dbReference type="EC" id="6.3.4.5"/>
    </reaction>
</comment>
<comment type="pathway">
    <text evidence="1">Amino-acid biosynthesis; L-arginine biosynthesis; L-arginine from L-ornithine and carbamoyl phosphate: step 2/3.</text>
</comment>
<comment type="subunit">
    <text evidence="1">Homotetramer.</text>
</comment>
<comment type="subcellular location">
    <subcellularLocation>
        <location evidence="1">Cytoplasm</location>
    </subcellularLocation>
</comment>
<comment type="similarity">
    <text evidence="1">Belongs to the argininosuccinate synthase family. Type 1 subfamily.</text>
</comment>
<gene>
    <name evidence="1" type="primary">argG</name>
    <name type="ordered locus">PTO0530</name>
</gene>
<sequence>MEKALLLYSGGLDTSVMVRWIKEKMNMDVVTLTLDIGNSDLEEIKEKALKLGAIDAITLDVKKEFADNYISREIHANGLYGEYPLSTALARPLMAEKAVSVANENDIKFIAHGSTGKGNDQVRFEVSINALDNNIKVIAPVREWNMTRADELEYAKMNNIYVKSDGKYSVDENIWGRSIEGSSIENINEPVNDDAFEWVTPPQYCGSGEPVSIEFYKGLPSSLNGKSMDLLSIIKNLNIIAGRNGIGIINMIESRLIGLKSHEVYECPAASVILKAHKYLENLILNKNELSVKNYIDNFWSNMVYNGLWFDPSMEHMNQFEKSSNQYITGSVNLRLYRGNMILEGIESPYSLYDYNTINYETGVFDQGSSKGFIDIYKNETVRSNRVKKALTVIH</sequence>
<reference key="1">
    <citation type="journal article" date="2004" name="Proc. Natl. Acad. Sci. U.S.A.">
        <title>Genome sequence of Picrophilus torridus and its implications for life around pH 0.</title>
        <authorList>
            <person name="Fuetterer O."/>
            <person name="Angelov A."/>
            <person name="Liesegang H."/>
            <person name="Gottschalk G."/>
            <person name="Schleper C."/>
            <person name="Schepers B."/>
            <person name="Dock C."/>
            <person name="Antranikian G."/>
            <person name="Liebl W."/>
        </authorList>
    </citation>
    <scope>NUCLEOTIDE SEQUENCE [LARGE SCALE GENOMIC DNA]</scope>
    <source>
        <strain>ATCC 700027 / DSM 9790 / JCM 10055 / NBRC 100828 / KAW 2/3</strain>
    </source>
</reference>
<evidence type="ECO:0000255" key="1">
    <source>
        <dbReference type="HAMAP-Rule" id="MF_00005"/>
    </source>
</evidence>